<keyword id="KW-0378">Hydrolase</keyword>
<keyword id="KW-0546">Nucleotide metabolism</keyword>
<keyword id="KW-0547">Nucleotide-binding</keyword>
<gene>
    <name evidence="1" type="primary">dcd</name>
    <name type="ordered locus">Mevan_0737</name>
</gene>
<protein>
    <recommendedName>
        <fullName evidence="1">dCTP deaminase, dUMP-forming</fullName>
        <ecNumber evidence="1">3.5.4.30</ecNumber>
    </recommendedName>
    <alternativeName>
        <fullName evidence="1">Bifunctional dCTP deaminase:dUTPase</fullName>
    </alternativeName>
    <alternativeName>
        <fullName evidence="1">DCD-DUT</fullName>
    </alternativeName>
</protein>
<accession>A6UQ71</accession>
<feature type="chain" id="PRO_1000117985" description="dCTP deaminase, dUMP-forming">
    <location>
        <begin position="1"/>
        <end position="206"/>
    </location>
</feature>
<feature type="active site" description="Proton donor/acceptor" evidence="1">
    <location>
        <position position="145"/>
    </location>
</feature>
<feature type="binding site" evidence="1">
    <location>
        <begin position="117"/>
        <end position="122"/>
    </location>
    <ligand>
        <name>dCTP</name>
        <dbReference type="ChEBI" id="CHEBI:61481"/>
    </ligand>
</feature>
<feature type="binding site" evidence="1">
    <location>
        <position position="135"/>
    </location>
    <ligand>
        <name>dCTP</name>
        <dbReference type="ChEBI" id="CHEBI:61481"/>
    </ligand>
</feature>
<feature type="binding site" evidence="1">
    <location>
        <begin position="143"/>
        <end position="145"/>
    </location>
    <ligand>
        <name>dCTP</name>
        <dbReference type="ChEBI" id="CHEBI:61481"/>
    </ligand>
</feature>
<feature type="binding site" evidence="1">
    <location>
        <position position="163"/>
    </location>
    <ligand>
        <name>dCTP</name>
        <dbReference type="ChEBI" id="CHEBI:61481"/>
    </ligand>
</feature>
<feature type="binding site" evidence="1">
    <location>
        <position position="177"/>
    </location>
    <ligand>
        <name>dCTP</name>
        <dbReference type="ChEBI" id="CHEBI:61481"/>
    </ligand>
</feature>
<feature type="binding site" evidence="1">
    <location>
        <position position="184"/>
    </location>
    <ligand>
        <name>dCTP</name>
        <dbReference type="ChEBI" id="CHEBI:61481"/>
    </ligand>
</feature>
<feature type="binding site" evidence="1">
    <location>
        <position position="188"/>
    </location>
    <ligand>
        <name>dCTP</name>
        <dbReference type="ChEBI" id="CHEBI:61481"/>
    </ligand>
</feature>
<feature type="site" description="Important for bifunctional activity" evidence="1">
    <location>
        <begin position="132"/>
        <end position="133"/>
    </location>
</feature>
<sequence>MILSDKDILNYVNSGRVCINPFNRNFVGPCSYDVTLGEEFITYNEDVYDVKKQLSHRSFKIDNSIMVCPLHHHLDEKIIERYKEKYSIDCVVSGGLLGTTNEYVELPNDVCAQYQGRSSFGRVFLQSHQTAGWIDSGFKGKITLEIVAYDKPVILYKNQRIGQLIFSKTLSPADIGYSDRKCSKYARQTSVMPSLIKKDFENDLEE</sequence>
<name>DCDB_METVS</name>
<proteinExistence type="inferred from homology"/>
<organism>
    <name type="scientific">Methanococcus vannielii (strain ATCC 35089 / DSM 1224 / JCM 13029 / OCM 148 / SB)</name>
    <dbReference type="NCBI Taxonomy" id="406327"/>
    <lineage>
        <taxon>Archaea</taxon>
        <taxon>Methanobacteriati</taxon>
        <taxon>Methanobacteriota</taxon>
        <taxon>Methanomada group</taxon>
        <taxon>Methanococci</taxon>
        <taxon>Methanococcales</taxon>
        <taxon>Methanococcaceae</taxon>
        <taxon>Methanococcus</taxon>
    </lineage>
</organism>
<evidence type="ECO:0000255" key="1">
    <source>
        <dbReference type="HAMAP-Rule" id="MF_00146"/>
    </source>
</evidence>
<comment type="function">
    <text evidence="1">Bifunctional enzyme that catalyzes both the deamination of dCTP to dUTP and the hydrolysis of dUTP to dUMP without releasing the toxic dUTP intermediate.</text>
</comment>
<comment type="catalytic activity">
    <reaction evidence="1">
        <text>dCTP + 2 H2O = dUMP + NH4(+) + diphosphate</text>
        <dbReference type="Rhea" id="RHEA:19205"/>
        <dbReference type="ChEBI" id="CHEBI:15377"/>
        <dbReference type="ChEBI" id="CHEBI:28938"/>
        <dbReference type="ChEBI" id="CHEBI:33019"/>
        <dbReference type="ChEBI" id="CHEBI:61481"/>
        <dbReference type="ChEBI" id="CHEBI:246422"/>
        <dbReference type="EC" id="3.5.4.30"/>
    </reaction>
</comment>
<comment type="pathway">
    <text evidence="1">Pyrimidine metabolism; dUMP biosynthesis; dUMP from dCTP: step 1/1.</text>
</comment>
<comment type="subunit">
    <text evidence="1">Homotrimer.</text>
</comment>
<comment type="similarity">
    <text evidence="1">Belongs to the dCTP deaminase family.</text>
</comment>
<dbReference type="EC" id="3.5.4.30" evidence="1"/>
<dbReference type="EMBL" id="CP000742">
    <property type="protein sequence ID" value="ABR54643.1"/>
    <property type="molecule type" value="Genomic_DNA"/>
</dbReference>
<dbReference type="RefSeq" id="WP_011972545.1">
    <property type="nucleotide sequence ID" value="NC_009634.1"/>
</dbReference>
<dbReference type="SMR" id="A6UQ71"/>
<dbReference type="STRING" id="406327.Mevan_0737"/>
<dbReference type="GeneID" id="5325639"/>
<dbReference type="KEGG" id="mvn:Mevan_0737"/>
<dbReference type="eggNOG" id="arCOG04048">
    <property type="taxonomic scope" value="Archaea"/>
</dbReference>
<dbReference type="HOGENOM" id="CLU_087476_2_1_2"/>
<dbReference type="OrthoDB" id="33242at2157"/>
<dbReference type="UniPathway" id="UPA00610">
    <property type="reaction ID" value="UER00667"/>
</dbReference>
<dbReference type="Proteomes" id="UP000001107">
    <property type="component" value="Chromosome"/>
</dbReference>
<dbReference type="GO" id="GO:0033973">
    <property type="term" value="F:dCTP deaminase (dUMP-forming) activity"/>
    <property type="evidence" value="ECO:0007669"/>
    <property type="project" value="UniProtKB-UniRule"/>
</dbReference>
<dbReference type="GO" id="GO:0008829">
    <property type="term" value="F:dCTP deaminase activity"/>
    <property type="evidence" value="ECO:0007669"/>
    <property type="project" value="InterPro"/>
</dbReference>
<dbReference type="GO" id="GO:0000166">
    <property type="term" value="F:nucleotide binding"/>
    <property type="evidence" value="ECO:0007669"/>
    <property type="project" value="UniProtKB-KW"/>
</dbReference>
<dbReference type="GO" id="GO:0006226">
    <property type="term" value="P:dUMP biosynthetic process"/>
    <property type="evidence" value="ECO:0007669"/>
    <property type="project" value="UniProtKB-UniRule"/>
</dbReference>
<dbReference type="GO" id="GO:0006229">
    <property type="term" value="P:dUTP biosynthetic process"/>
    <property type="evidence" value="ECO:0007669"/>
    <property type="project" value="InterPro"/>
</dbReference>
<dbReference type="CDD" id="cd07557">
    <property type="entry name" value="trimeric_dUTPase"/>
    <property type="match status" value="1"/>
</dbReference>
<dbReference type="Gene3D" id="2.70.40.10">
    <property type="match status" value="1"/>
</dbReference>
<dbReference type="HAMAP" id="MF_00146">
    <property type="entry name" value="dCTP_deaminase"/>
    <property type="match status" value="1"/>
</dbReference>
<dbReference type="InterPro" id="IPR011962">
    <property type="entry name" value="dCTP_deaminase"/>
</dbReference>
<dbReference type="InterPro" id="IPR036157">
    <property type="entry name" value="dUTPase-like_sf"/>
</dbReference>
<dbReference type="InterPro" id="IPR033704">
    <property type="entry name" value="dUTPase_trimeric"/>
</dbReference>
<dbReference type="NCBIfam" id="TIGR02274">
    <property type="entry name" value="dCTP_deam"/>
    <property type="match status" value="1"/>
</dbReference>
<dbReference type="PANTHER" id="PTHR42680">
    <property type="entry name" value="DCTP DEAMINASE"/>
    <property type="match status" value="1"/>
</dbReference>
<dbReference type="PANTHER" id="PTHR42680:SF3">
    <property type="entry name" value="DCTP DEAMINASE"/>
    <property type="match status" value="1"/>
</dbReference>
<dbReference type="Pfam" id="PF22769">
    <property type="entry name" value="DCD"/>
    <property type="match status" value="1"/>
</dbReference>
<dbReference type="SUPFAM" id="SSF51283">
    <property type="entry name" value="dUTPase-like"/>
    <property type="match status" value="1"/>
</dbReference>
<reference key="1">
    <citation type="submission" date="2007-06" db="EMBL/GenBank/DDBJ databases">
        <title>Complete sequence of Methanococcus vannielii SB.</title>
        <authorList>
            <consortium name="US DOE Joint Genome Institute"/>
            <person name="Copeland A."/>
            <person name="Lucas S."/>
            <person name="Lapidus A."/>
            <person name="Barry K."/>
            <person name="Glavina del Rio T."/>
            <person name="Dalin E."/>
            <person name="Tice H."/>
            <person name="Pitluck S."/>
            <person name="Chain P."/>
            <person name="Malfatti S."/>
            <person name="Shin M."/>
            <person name="Vergez L."/>
            <person name="Schmutz J."/>
            <person name="Larimer F."/>
            <person name="Land M."/>
            <person name="Hauser L."/>
            <person name="Kyrpides N."/>
            <person name="Anderson I."/>
            <person name="Sieprawska-Lupa M."/>
            <person name="Whitman W.B."/>
            <person name="Richardson P."/>
        </authorList>
    </citation>
    <scope>NUCLEOTIDE SEQUENCE [LARGE SCALE GENOMIC DNA]</scope>
    <source>
        <strain>ATCC 35089 / DSM 1224 / JCM 13029 / OCM 148 / SB</strain>
    </source>
</reference>